<proteinExistence type="inferred from homology"/>
<protein>
    <recommendedName>
        <fullName evidence="1">Putative pre-16S rRNA nuclease</fullName>
        <ecNumber evidence="1">3.1.-.-</ecNumber>
    </recommendedName>
</protein>
<feature type="chain" id="PRO_0000172111" description="Putative pre-16S rRNA nuclease">
    <location>
        <begin position="1"/>
        <end position="139"/>
    </location>
</feature>
<name>YQGF_PHOLL</name>
<accession>Q7N7G7</accession>
<gene>
    <name evidence="1" type="primary">yqgF</name>
    <name type="ordered locus">plu1182</name>
</gene>
<dbReference type="EC" id="3.1.-.-" evidence="1"/>
<dbReference type="EMBL" id="BX571862">
    <property type="protein sequence ID" value="CAE13476.1"/>
    <property type="molecule type" value="Genomic_DNA"/>
</dbReference>
<dbReference type="RefSeq" id="WP_011145509.1">
    <property type="nucleotide sequence ID" value="NC_005126.1"/>
</dbReference>
<dbReference type="SMR" id="Q7N7G7"/>
<dbReference type="STRING" id="243265.plu1182"/>
<dbReference type="GeneID" id="48847452"/>
<dbReference type="KEGG" id="plu:plu1182"/>
<dbReference type="eggNOG" id="COG0816">
    <property type="taxonomic scope" value="Bacteria"/>
</dbReference>
<dbReference type="HOGENOM" id="CLU_098240_3_0_6"/>
<dbReference type="OrthoDB" id="9796140at2"/>
<dbReference type="Proteomes" id="UP000002514">
    <property type="component" value="Chromosome"/>
</dbReference>
<dbReference type="GO" id="GO:0005829">
    <property type="term" value="C:cytosol"/>
    <property type="evidence" value="ECO:0007669"/>
    <property type="project" value="TreeGrafter"/>
</dbReference>
<dbReference type="GO" id="GO:0004518">
    <property type="term" value="F:nuclease activity"/>
    <property type="evidence" value="ECO:0007669"/>
    <property type="project" value="UniProtKB-KW"/>
</dbReference>
<dbReference type="GO" id="GO:0000967">
    <property type="term" value="P:rRNA 5'-end processing"/>
    <property type="evidence" value="ECO:0007669"/>
    <property type="project" value="UniProtKB-UniRule"/>
</dbReference>
<dbReference type="CDD" id="cd16964">
    <property type="entry name" value="YqgF"/>
    <property type="match status" value="1"/>
</dbReference>
<dbReference type="FunFam" id="3.30.420.140:FF:000002">
    <property type="entry name" value="Putative pre-16S rRNA nuclease"/>
    <property type="match status" value="1"/>
</dbReference>
<dbReference type="Gene3D" id="3.30.420.140">
    <property type="entry name" value="YqgF/RNase H-like domain"/>
    <property type="match status" value="1"/>
</dbReference>
<dbReference type="HAMAP" id="MF_00651">
    <property type="entry name" value="Nuclease_YqgF"/>
    <property type="match status" value="1"/>
</dbReference>
<dbReference type="InterPro" id="IPR012337">
    <property type="entry name" value="RNaseH-like_sf"/>
</dbReference>
<dbReference type="InterPro" id="IPR005227">
    <property type="entry name" value="YqgF"/>
</dbReference>
<dbReference type="InterPro" id="IPR006641">
    <property type="entry name" value="YqgF/RNaseH-like_dom"/>
</dbReference>
<dbReference type="InterPro" id="IPR037027">
    <property type="entry name" value="YqgF/RNaseH-like_dom_sf"/>
</dbReference>
<dbReference type="NCBIfam" id="TIGR00250">
    <property type="entry name" value="RNAse_H_YqgF"/>
    <property type="match status" value="1"/>
</dbReference>
<dbReference type="PANTHER" id="PTHR33317">
    <property type="entry name" value="POLYNUCLEOTIDYL TRANSFERASE, RIBONUCLEASE H-LIKE SUPERFAMILY PROTEIN"/>
    <property type="match status" value="1"/>
</dbReference>
<dbReference type="PANTHER" id="PTHR33317:SF4">
    <property type="entry name" value="POLYNUCLEOTIDYL TRANSFERASE, RIBONUCLEASE H-LIKE SUPERFAMILY PROTEIN"/>
    <property type="match status" value="1"/>
</dbReference>
<dbReference type="Pfam" id="PF03652">
    <property type="entry name" value="RuvX"/>
    <property type="match status" value="1"/>
</dbReference>
<dbReference type="SMART" id="SM00732">
    <property type="entry name" value="YqgFc"/>
    <property type="match status" value="1"/>
</dbReference>
<dbReference type="SUPFAM" id="SSF53098">
    <property type="entry name" value="Ribonuclease H-like"/>
    <property type="match status" value="1"/>
</dbReference>
<organism>
    <name type="scientific">Photorhabdus laumondii subsp. laumondii (strain DSM 15139 / CIP 105565 / TT01)</name>
    <name type="common">Photorhabdus luminescens subsp. laumondii</name>
    <dbReference type="NCBI Taxonomy" id="243265"/>
    <lineage>
        <taxon>Bacteria</taxon>
        <taxon>Pseudomonadati</taxon>
        <taxon>Pseudomonadota</taxon>
        <taxon>Gammaproteobacteria</taxon>
        <taxon>Enterobacterales</taxon>
        <taxon>Morganellaceae</taxon>
        <taxon>Photorhabdus</taxon>
    </lineage>
</organism>
<evidence type="ECO:0000255" key="1">
    <source>
        <dbReference type="HAMAP-Rule" id="MF_00651"/>
    </source>
</evidence>
<comment type="function">
    <text evidence="1">Could be a nuclease involved in processing of the 5'-end of pre-16S rRNA.</text>
</comment>
<comment type="subcellular location">
    <subcellularLocation>
        <location evidence="1">Cytoplasm</location>
    </subcellularLocation>
</comment>
<comment type="similarity">
    <text evidence="1">Belongs to the YqgF nuclease family.</text>
</comment>
<keyword id="KW-0963">Cytoplasm</keyword>
<keyword id="KW-0378">Hydrolase</keyword>
<keyword id="KW-0540">Nuclease</keyword>
<keyword id="KW-1185">Reference proteome</keyword>
<keyword id="KW-0690">Ribosome biogenesis</keyword>
<sequence>MNNRTIMAFDFGTRSIGAAIGQEITGTARALTSFKATDGIPNWGQIEKLLKEWQPDLVIVGLPLNMDGTEQFVTVQARKFANRLHGRFGVQVQLQDERLTTVEARAHLFDRGGYKALNKGKVDATSAVIILESWFEQRY</sequence>
<reference key="1">
    <citation type="journal article" date="2003" name="Nat. Biotechnol.">
        <title>The genome sequence of the entomopathogenic bacterium Photorhabdus luminescens.</title>
        <authorList>
            <person name="Duchaud E."/>
            <person name="Rusniok C."/>
            <person name="Frangeul L."/>
            <person name="Buchrieser C."/>
            <person name="Givaudan A."/>
            <person name="Taourit S."/>
            <person name="Bocs S."/>
            <person name="Boursaux-Eude C."/>
            <person name="Chandler M."/>
            <person name="Charles J.-F."/>
            <person name="Dassa E."/>
            <person name="Derose R."/>
            <person name="Derzelle S."/>
            <person name="Freyssinet G."/>
            <person name="Gaudriault S."/>
            <person name="Medigue C."/>
            <person name="Lanois A."/>
            <person name="Powell K."/>
            <person name="Siguier P."/>
            <person name="Vincent R."/>
            <person name="Wingate V."/>
            <person name="Zouine M."/>
            <person name="Glaser P."/>
            <person name="Boemare N."/>
            <person name="Danchin A."/>
            <person name="Kunst F."/>
        </authorList>
    </citation>
    <scope>NUCLEOTIDE SEQUENCE [LARGE SCALE GENOMIC DNA]</scope>
    <source>
        <strain>DSM 15139 / CIP 105565 / TT01</strain>
    </source>
</reference>